<keyword id="KW-0042">Antenna complex</keyword>
<keyword id="KW-0089">Bile pigment</keyword>
<keyword id="KW-0157">Chromophore</keyword>
<keyword id="KW-0903">Direct protein sequencing</keyword>
<keyword id="KW-0249">Electron transport</keyword>
<keyword id="KW-0472">Membrane</keyword>
<keyword id="KW-0602">Photosynthesis</keyword>
<keyword id="KW-0605">Phycobilisome</keyword>
<keyword id="KW-0793">Thylakoid</keyword>
<keyword id="KW-0813">Transport</keyword>
<comment type="function">
    <text>Light-harvesting photosynthetic bile pigment-protein from the phycobiliprotein complex. Allophycocyanin has a maximum absorption at approximately 650 nanometers.</text>
</comment>
<comment type="subunit">
    <text>Heterodimer of an alpha and a beta chain.</text>
</comment>
<comment type="subcellular location">
    <subcellularLocation>
        <location>Cellular thylakoid membrane</location>
        <topology>Peripheral membrane protein</topology>
        <orientation>Cytoplasmic side</orientation>
    </subcellularLocation>
    <text>Forms the core of the phycobilisome.</text>
</comment>
<comment type="PTM">
    <text>Contains one covalently linked bilin chromophore.</text>
</comment>
<comment type="similarity">
    <text evidence="1">Belongs to the phycobiliprotein family.</text>
</comment>
<name>APCD_MASLA</name>
<reference key="1">
    <citation type="journal article" date="1987" name="FEBS Lett.">
        <title>Amino acid sequences of alpha-allophycocyanin B from Synechococcus 6301 and Mastigocladus laminosus.</title>
        <authorList>
            <person name="Suter F."/>
            <person name="Fueglistaller P."/>
            <person name="Lundell D.J."/>
            <person name="Glazer A.N."/>
            <person name="Zuber H."/>
        </authorList>
    </citation>
    <scope>PROTEIN SEQUENCE</scope>
</reference>
<protein>
    <recommendedName>
        <fullName>Allophycocyanin alpha-B chain</fullName>
    </recommendedName>
</protein>
<feature type="chain" id="PRO_0000199086" description="Allophycocyanin alpha-B chain">
    <location>
        <begin position="1"/>
        <end position="40" status="greater than"/>
    </location>
</feature>
<feature type="non-terminal residue">
    <location>
        <position position="40"/>
    </location>
</feature>
<evidence type="ECO:0000305" key="1"/>
<proteinExistence type="evidence at protein level"/>
<organism>
    <name type="scientific">Mastigocladus laminosus</name>
    <name type="common">Fischerella sp.</name>
    <dbReference type="NCBI Taxonomy" id="83541"/>
    <lineage>
        <taxon>Bacteria</taxon>
        <taxon>Bacillati</taxon>
        <taxon>Cyanobacteriota</taxon>
        <taxon>Cyanophyceae</taxon>
        <taxon>Nostocales</taxon>
        <taxon>Hapalosiphonaceae</taxon>
        <taxon>Mastigocladus</taxon>
    </lineage>
</organism>
<dbReference type="PIR" id="B27398">
    <property type="entry name" value="B27398"/>
</dbReference>
<dbReference type="SMR" id="P11389"/>
<dbReference type="GO" id="GO:0030089">
    <property type="term" value="C:phycobilisome"/>
    <property type="evidence" value="ECO:0007669"/>
    <property type="project" value="UniProtKB-KW"/>
</dbReference>
<dbReference type="GO" id="GO:0031676">
    <property type="term" value="C:plasma membrane-derived thylakoid membrane"/>
    <property type="evidence" value="ECO:0007669"/>
    <property type="project" value="UniProtKB-SubCell"/>
</dbReference>
<dbReference type="GO" id="GO:0015979">
    <property type="term" value="P:photosynthesis"/>
    <property type="evidence" value="ECO:0007669"/>
    <property type="project" value="UniProtKB-KW"/>
</dbReference>
<dbReference type="Gene3D" id="1.10.490.20">
    <property type="entry name" value="Phycocyanins"/>
    <property type="match status" value="1"/>
</dbReference>
<dbReference type="InterPro" id="IPR009050">
    <property type="entry name" value="Globin-like_sf"/>
</dbReference>
<dbReference type="InterPro" id="IPR012128">
    <property type="entry name" value="Phycobilisome_asu/bsu"/>
</dbReference>
<dbReference type="InterPro" id="IPR038719">
    <property type="entry name" value="Phycobilisome_asu/bsu_sf"/>
</dbReference>
<dbReference type="Pfam" id="PF00502">
    <property type="entry name" value="Phycobilisome"/>
    <property type="match status" value="1"/>
</dbReference>
<dbReference type="SUPFAM" id="SSF46458">
    <property type="entry name" value="Globin-like"/>
    <property type="match status" value="1"/>
</dbReference>
<sequence>TVVSQVILKADDELRYPSSGELKSITEFLQTGEQRVRIAQ</sequence>
<accession>P11389</accession>